<feature type="chain" id="PRO_0000301937" description="3-hydroxyacyl-[acyl-carrier-protein] dehydratase FabZ">
    <location>
        <begin position="1"/>
        <end position="168"/>
    </location>
</feature>
<feature type="active site" evidence="1">
    <location>
        <position position="54"/>
    </location>
</feature>
<comment type="function">
    <text evidence="1">Involved in unsaturated fatty acids biosynthesis. Catalyzes the dehydration of short chain beta-hydroxyacyl-ACPs and long chain saturated and unsaturated beta-hydroxyacyl-ACPs.</text>
</comment>
<comment type="catalytic activity">
    <reaction evidence="1">
        <text>a (3R)-hydroxyacyl-[ACP] = a (2E)-enoyl-[ACP] + H2O</text>
        <dbReference type="Rhea" id="RHEA:13097"/>
        <dbReference type="Rhea" id="RHEA-COMP:9925"/>
        <dbReference type="Rhea" id="RHEA-COMP:9945"/>
        <dbReference type="ChEBI" id="CHEBI:15377"/>
        <dbReference type="ChEBI" id="CHEBI:78784"/>
        <dbReference type="ChEBI" id="CHEBI:78827"/>
        <dbReference type="EC" id="4.2.1.59"/>
    </reaction>
</comment>
<comment type="subcellular location">
    <subcellularLocation>
        <location evidence="1">Cytoplasm</location>
    </subcellularLocation>
</comment>
<comment type="similarity">
    <text evidence="1">Belongs to the thioester dehydratase family. FabZ subfamily.</text>
</comment>
<name>FABZ_YERE8</name>
<proteinExistence type="inferred from homology"/>
<dbReference type="EC" id="4.2.1.59" evidence="1"/>
<dbReference type="EMBL" id="AM286415">
    <property type="protein sequence ID" value="CAL13303.1"/>
    <property type="molecule type" value="Genomic_DNA"/>
</dbReference>
<dbReference type="RefSeq" id="WP_005173178.1">
    <property type="nucleotide sequence ID" value="NC_008800.1"/>
</dbReference>
<dbReference type="RefSeq" id="YP_001007447.1">
    <property type="nucleotide sequence ID" value="NC_008800.1"/>
</dbReference>
<dbReference type="SMR" id="A1JP70"/>
<dbReference type="KEGG" id="yen:YE3273"/>
<dbReference type="PATRIC" id="fig|393305.7.peg.3481"/>
<dbReference type="eggNOG" id="COG0764">
    <property type="taxonomic scope" value="Bacteria"/>
</dbReference>
<dbReference type="HOGENOM" id="CLU_078912_1_0_6"/>
<dbReference type="OrthoDB" id="9772788at2"/>
<dbReference type="Proteomes" id="UP000000642">
    <property type="component" value="Chromosome"/>
</dbReference>
<dbReference type="GO" id="GO:0005737">
    <property type="term" value="C:cytoplasm"/>
    <property type="evidence" value="ECO:0007669"/>
    <property type="project" value="UniProtKB-SubCell"/>
</dbReference>
<dbReference type="GO" id="GO:0016020">
    <property type="term" value="C:membrane"/>
    <property type="evidence" value="ECO:0007669"/>
    <property type="project" value="GOC"/>
</dbReference>
<dbReference type="GO" id="GO:0019171">
    <property type="term" value="F:(3R)-hydroxyacyl-[acyl-carrier-protein] dehydratase activity"/>
    <property type="evidence" value="ECO:0007669"/>
    <property type="project" value="UniProtKB-EC"/>
</dbReference>
<dbReference type="GO" id="GO:0006633">
    <property type="term" value="P:fatty acid biosynthetic process"/>
    <property type="evidence" value="ECO:0007669"/>
    <property type="project" value="UniProtKB-UniRule"/>
</dbReference>
<dbReference type="GO" id="GO:0009245">
    <property type="term" value="P:lipid A biosynthetic process"/>
    <property type="evidence" value="ECO:0007669"/>
    <property type="project" value="UniProtKB-UniRule"/>
</dbReference>
<dbReference type="CDD" id="cd01288">
    <property type="entry name" value="FabZ"/>
    <property type="match status" value="1"/>
</dbReference>
<dbReference type="FunFam" id="3.10.129.10:FF:000001">
    <property type="entry name" value="3-hydroxyacyl-[acyl-carrier-protein] dehydratase FabZ"/>
    <property type="match status" value="1"/>
</dbReference>
<dbReference type="Gene3D" id="3.10.129.10">
    <property type="entry name" value="Hotdog Thioesterase"/>
    <property type="match status" value="1"/>
</dbReference>
<dbReference type="HAMAP" id="MF_00406">
    <property type="entry name" value="FabZ"/>
    <property type="match status" value="1"/>
</dbReference>
<dbReference type="InterPro" id="IPR013114">
    <property type="entry name" value="FabA_FabZ"/>
</dbReference>
<dbReference type="InterPro" id="IPR010084">
    <property type="entry name" value="FabZ"/>
</dbReference>
<dbReference type="InterPro" id="IPR029069">
    <property type="entry name" value="HotDog_dom_sf"/>
</dbReference>
<dbReference type="NCBIfam" id="TIGR01750">
    <property type="entry name" value="fabZ"/>
    <property type="match status" value="1"/>
</dbReference>
<dbReference type="NCBIfam" id="NF000582">
    <property type="entry name" value="PRK00006.1"/>
    <property type="match status" value="1"/>
</dbReference>
<dbReference type="PANTHER" id="PTHR30272">
    <property type="entry name" value="3-HYDROXYACYL-[ACYL-CARRIER-PROTEIN] DEHYDRATASE"/>
    <property type="match status" value="1"/>
</dbReference>
<dbReference type="PANTHER" id="PTHR30272:SF1">
    <property type="entry name" value="3-HYDROXYACYL-[ACYL-CARRIER-PROTEIN] DEHYDRATASE"/>
    <property type="match status" value="1"/>
</dbReference>
<dbReference type="Pfam" id="PF07977">
    <property type="entry name" value="FabA"/>
    <property type="match status" value="1"/>
</dbReference>
<dbReference type="SUPFAM" id="SSF54637">
    <property type="entry name" value="Thioesterase/thiol ester dehydrase-isomerase"/>
    <property type="match status" value="1"/>
</dbReference>
<gene>
    <name evidence="1" type="primary">fabZ</name>
    <name type="ordered locus">YE3273</name>
</gene>
<evidence type="ECO:0000255" key="1">
    <source>
        <dbReference type="HAMAP-Rule" id="MF_00406"/>
    </source>
</evidence>
<protein>
    <recommendedName>
        <fullName evidence="1">3-hydroxyacyl-[acyl-carrier-protein] dehydratase FabZ</fullName>
        <ecNumber evidence="1">4.2.1.59</ecNumber>
    </recommendedName>
    <alternativeName>
        <fullName evidence="1">(3R)-hydroxymyristoyl-[acyl-carrier-protein] dehydratase</fullName>
        <shortName evidence="1">(3R)-hydroxymyristoyl-ACP dehydrase</shortName>
    </alternativeName>
    <alternativeName>
        <fullName evidence="1">Beta-hydroxyacyl-ACP dehydratase</fullName>
    </alternativeName>
</protein>
<accession>A1JP70</accession>
<sequence length="168" mass="18847">MTTDTHTLHIEEILDLLPHRFPFLLVDRVLDFEEGKFLRAVKNVSFNEPFFQGHFPGKPIFPGVLILEAMAQATGILAFKSRGKLEPGELYYFAGIDEARFKRPVVPGDQMIMEVEFVKERRGLTRFTGVAKVDGEIVCTATMMCARSKPATAVVTKSEVTKPDVKES</sequence>
<organism>
    <name type="scientific">Yersinia enterocolitica serotype O:8 / biotype 1B (strain NCTC 13174 / 8081)</name>
    <dbReference type="NCBI Taxonomy" id="393305"/>
    <lineage>
        <taxon>Bacteria</taxon>
        <taxon>Pseudomonadati</taxon>
        <taxon>Pseudomonadota</taxon>
        <taxon>Gammaproteobacteria</taxon>
        <taxon>Enterobacterales</taxon>
        <taxon>Yersiniaceae</taxon>
        <taxon>Yersinia</taxon>
    </lineage>
</organism>
<reference key="1">
    <citation type="journal article" date="2006" name="PLoS Genet.">
        <title>The complete genome sequence and comparative genome analysis of the high pathogenicity Yersinia enterocolitica strain 8081.</title>
        <authorList>
            <person name="Thomson N.R."/>
            <person name="Howard S."/>
            <person name="Wren B.W."/>
            <person name="Holden M.T.G."/>
            <person name="Crossman L."/>
            <person name="Challis G.L."/>
            <person name="Churcher C."/>
            <person name="Mungall K."/>
            <person name="Brooks K."/>
            <person name="Chillingworth T."/>
            <person name="Feltwell T."/>
            <person name="Abdellah Z."/>
            <person name="Hauser H."/>
            <person name="Jagels K."/>
            <person name="Maddison M."/>
            <person name="Moule S."/>
            <person name="Sanders M."/>
            <person name="Whitehead S."/>
            <person name="Quail M.A."/>
            <person name="Dougan G."/>
            <person name="Parkhill J."/>
            <person name="Prentice M.B."/>
        </authorList>
    </citation>
    <scope>NUCLEOTIDE SEQUENCE [LARGE SCALE GENOMIC DNA]</scope>
    <source>
        <strain>NCTC 13174 / 8081</strain>
    </source>
</reference>
<keyword id="KW-0963">Cytoplasm</keyword>
<keyword id="KW-0441">Lipid A biosynthesis</keyword>
<keyword id="KW-0444">Lipid biosynthesis</keyword>
<keyword id="KW-0443">Lipid metabolism</keyword>
<keyword id="KW-0456">Lyase</keyword>